<feature type="chain" id="PRO_0000250045" description="Anhydro-N-acetylmuramic acid kinase">
    <location>
        <begin position="1"/>
        <end position="389"/>
    </location>
</feature>
<feature type="binding site" evidence="1">
    <location>
        <begin position="11"/>
        <end position="18"/>
    </location>
    <ligand>
        <name>ATP</name>
        <dbReference type="ChEBI" id="CHEBI:30616"/>
    </ligand>
</feature>
<comment type="function">
    <text evidence="1">Catalyzes the specific phosphorylation of 1,6-anhydro-N-acetylmuramic acid (anhMurNAc) with the simultaneous cleavage of the 1,6-anhydro ring, generating MurNAc-6-P. Is required for the utilization of anhMurNAc either imported from the medium or derived from its own cell wall murein, and thus plays a role in cell wall recycling.</text>
</comment>
<comment type="catalytic activity">
    <reaction evidence="1">
        <text>1,6-anhydro-N-acetyl-beta-muramate + ATP + H2O = N-acetyl-D-muramate 6-phosphate + ADP + H(+)</text>
        <dbReference type="Rhea" id="RHEA:24952"/>
        <dbReference type="ChEBI" id="CHEBI:15377"/>
        <dbReference type="ChEBI" id="CHEBI:15378"/>
        <dbReference type="ChEBI" id="CHEBI:30616"/>
        <dbReference type="ChEBI" id="CHEBI:58690"/>
        <dbReference type="ChEBI" id="CHEBI:58722"/>
        <dbReference type="ChEBI" id="CHEBI:456216"/>
        <dbReference type="EC" id="2.7.1.170"/>
    </reaction>
</comment>
<comment type="pathway">
    <text evidence="1">Amino-sugar metabolism; 1,6-anhydro-N-acetylmuramate degradation.</text>
</comment>
<comment type="pathway">
    <text evidence="1">Cell wall biogenesis; peptidoglycan recycling.</text>
</comment>
<comment type="similarity">
    <text evidence="1">Belongs to the anhydro-N-acetylmuramic acid kinase family.</text>
</comment>
<protein>
    <recommendedName>
        <fullName evidence="1">Anhydro-N-acetylmuramic acid kinase</fullName>
        <ecNumber evidence="1">2.7.1.170</ecNumber>
    </recommendedName>
    <alternativeName>
        <fullName evidence="1">AnhMurNAc kinase</fullName>
    </alternativeName>
</protein>
<gene>
    <name evidence="1" type="primary">anmK</name>
    <name type="ordered locus">Rfer_0726</name>
</gene>
<evidence type="ECO:0000255" key="1">
    <source>
        <dbReference type="HAMAP-Rule" id="MF_01270"/>
    </source>
</evidence>
<dbReference type="EC" id="2.7.1.170" evidence="1"/>
<dbReference type="EMBL" id="CP000267">
    <property type="protein sequence ID" value="ABD68476.1"/>
    <property type="molecule type" value="Genomic_DNA"/>
</dbReference>
<dbReference type="RefSeq" id="WP_011463049.1">
    <property type="nucleotide sequence ID" value="NC_007908.1"/>
</dbReference>
<dbReference type="SMR" id="Q220S7"/>
<dbReference type="STRING" id="338969.Rfer_0726"/>
<dbReference type="KEGG" id="rfr:Rfer_0726"/>
<dbReference type="eggNOG" id="COG2377">
    <property type="taxonomic scope" value="Bacteria"/>
</dbReference>
<dbReference type="HOGENOM" id="CLU_038782_0_0_4"/>
<dbReference type="OrthoDB" id="9763949at2"/>
<dbReference type="UniPathway" id="UPA00343"/>
<dbReference type="UniPathway" id="UPA00544"/>
<dbReference type="Proteomes" id="UP000008332">
    <property type="component" value="Chromosome"/>
</dbReference>
<dbReference type="GO" id="GO:0005524">
    <property type="term" value="F:ATP binding"/>
    <property type="evidence" value="ECO:0007669"/>
    <property type="project" value="UniProtKB-UniRule"/>
</dbReference>
<dbReference type="GO" id="GO:0016301">
    <property type="term" value="F:kinase activity"/>
    <property type="evidence" value="ECO:0007669"/>
    <property type="project" value="UniProtKB-KW"/>
</dbReference>
<dbReference type="GO" id="GO:0016773">
    <property type="term" value="F:phosphotransferase activity, alcohol group as acceptor"/>
    <property type="evidence" value="ECO:0007669"/>
    <property type="project" value="UniProtKB-UniRule"/>
</dbReference>
<dbReference type="GO" id="GO:0097175">
    <property type="term" value="P:1,6-anhydro-N-acetyl-beta-muramic acid catabolic process"/>
    <property type="evidence" value="ECO:0007669"/>
    <property type="project" value="UniProtKB-UniRule"/>
</dbReference>
<dbReference type="GO" id="GO:0006040">
    <property type="term" value="P:amino sugar metabolic process"/>
    <property type="evidence" value="ECO:0007669"/>
    <property type="project" value="InterPro"/>
</dbReference>
<dbReference type="GO" id="GO:0009254">
    <property type="term" value="P:peptidoglycan turnover"/>
    <property type="evidence" value="ECO:0007669"/>
    <property type="project" value="UniProtKB-UniRule"/>
</dbReference>
<dbReference type="CDD" id="cd24050">
    <property type="entry name" value="ASKHA_NBD_ANMK"/>
    <property type="match status" value="1"/>
</dbReference>
<dbReference type="Gene3D" id="3.30.420.40">
    <property type="match status" value="2"/>
</dbReference>
<dbReference type="HAMAP" id="MF_01270">
    <property type="entry name" value="AnhMurNAc_kinase"/>
    <property type="match status" value="1"/>
</dbReference>
<dbReference type="InterPro" id="IPR005338">
    <property type="entry name" value="Anhydro_N_Ac-Mur_kinase"/>
</dbReference>
<dbReference type="InterPro" id="IPR043129">
    <property type="entry name" value="ATPase_NBD"/>
</dbReference>
<dbReference type="NCBIfam" id="NF007139">
    <property type="entry name" value="PRK09585.1-3"/>
    <property type="match status" value="1"/>
</dbReference>
<dbReference type="PANTHER" id="PTHR30605">
    <property type="entry name" value="ANHYDRO-N-ACETYLMURAMIC ACID KINASE"/>
    <property type="match status" value="1"/>
</dbReference>
<dbReference type="PANTHER" id="PTHR30605:SF0">
    <property type="entry name" value="ANHYDRO-N-ACETYLMURAMIC ACID KINASE"/>
    <property type="match status" value="1"/>
</dbReference>
<dbReference type="Pfam" id="PF03702">
    <property type="entry name" value="AnmK"/>
    <property type="match status" value="1"/>
</dbReference>
<dbReference type="SUPFAM" id="SSF53067">
    <property type="entry name" value="Actin-like ATPase domain"/>
    <property type="match status" value="1"/>
</dbReference>
<organism>
    <name type="scientific">Albidiferax ferrireducens (strain ATCC BAA-621 / DSM 15236 / T118)</name>
    <name type="common">Rhodoferax ferrireducens</name>
    <dbReference type="NCBI Taxonomy" id="338969"/>
    <lineage>
        <taxon>Bacteria</taxon>
        <taxon>Pseudomonadati</taxon>
        <taxon>Pseudomonadota</taxon>
        <taxon>Betaproteobacteria</taxon>
        <taxon>Burkholderiales</taxon>
        <taxon>Comamonadaceae</taxon>
        <taxon>Rhodoferax</taxon>
    </lineage>
</organism>
<keyword id="KW-0067">ATP-binding</keyword>
<keyword id="KW-0119">Carbohydrate metabolism</keyword>
<keyword id="KW-0418">Kinase</keyword>
<keyword id="KW-0547">Nucleotide-binding</keyword>
<keyword id="KW-1185">Reference proteome</keyword>
<keyword id="KW-0808">Transferase</keyword>
<sequence>MSDLYIGLMSGTSLDGVDGVVVDFSGAHLRVLAHVNAPLSTALTHELLALNSPGTNELHRAALAANALVRVYAHVVAQLLELADIEHSAVAAIGAHGQTVRHQPQSFDGTGYTLQLNNPALLAELTGMDVVADFRSRDVAAGGQGAPLVPAFHQSAFGQPDQTLAVLNLGGMSNLTVLGPCPATESPAGVLDADPPSCFHSHDVLGFDCGPGNALMDTWCLQHIGQPFDADGAWAAAGRVHGELLAALLDEPYFAQSAPKSTGRDLFNSGWLTWKLEKFSSVAPVDVQATLTELTASVCATCVKRYGSESSTLIVCGGGAFNSHLMVRLQALLPRLKVISSQARGLPPLQVEAAAFAWLARNTLLRKTSSLEKVTGASGARILGAIYPA</sequence>
<accession>Q220S7</accession>
<reference key="1">
    <citation type="submission" date="2006-02" db="EMBL/GenBank/DDBJ databases">
        <title>Complete sequence of chromosome of Rhodoferax ferrireducens DSM 15236.</title>
        <authorList>
            <person name="Copeland A."/>
            <person name="Lucas S."/>
            <person name="Lapidus A."/>
            <person name="Barry K."/>
            <person name="Detter J.C."/>
            <person name="Glavina del Rio T."/>
            <person name="Hammon N."/>
            <person name="Israni S."/>
            <person name="Pitluck S."/>
            <person name="Brettin T."/>
            <person name="Bruce D."/>
            <person name="Han C."/>
            <person name="Tapia R."/>
            <person name="Gilna P."/>
            <person name="Kiss H."/>
            <person name="Schmutz J."/>
            <person name="Larimer F."/>
            <person name="Land M."/>
            <person name="Kyrpides N."/>
            <person name="Ivanova N."/>
            <person name="Richardson P."/>
        </authorList>
    </citation>
    <scope>NUCLEOTIDE SEQUENCE [LARGE SCALE GENOMIC DNA]</scope>
    <source>
        <strain>ATCC BAA-621 / DSM 15236 / T118</strain>
    </source>
</reference>
<proteinExistence type="inferred from homology"/>
<name>ANMK_ALBFT</name>